<evidence type="ECO:0000250" key="1">
    <source>
        <dbReference type="UniProtKB" id="P0AAB4"/>
    </source>
</evidence>
<evidence type="ECO:0000250" key="2">
    <source>
        <dbReference type="UniProtKB" id="Q9YA60"/>
    </source>
</evidence>
<evidence type="ECO:0000305" key="3"/>
<gene>
    <name type="ordered locus">MJ1133</name>
</gene>
<accession>Q58533</accession>
<feature type="chain" id="PRO_0000157383" description="Anhydromevalonate phosphate decarboxylase">
    <location>
        <begin position="1"/>
        <end position="421"/>
    </location>
</feature>
<feature type="active site" description="Proton acceptor" evidence="1">
    <location>
        <position position="240"/>
    </location>
</feature>
<feature type="binding site" evidence="1">
    <location>
        <position position="131"/>
    </location>
    <ligand>
        <name>Mn(2+)</name>
        <dbReference type="ChEBI" id="CHEBI:29035"/>
    </ligand>
</feature>
<feature type="binding site" evidence="1">
    <location>
        <position position="194"/>
    </location>
    <ligand>
        <name>Mn(2+)</name>
        <dbReference type="ChEBI" id="CHEBI:29035"/>
    </ligand>
</feature>
<keyword id="KW-0210">Decarboxylase</keyword>
<keyword id="KW-0285">Flavoprotein</keyword>
<keyword id="KW-0288">FMN</keyword>
<keyword id="KW-0414">Isoprene biosynthesis</keyword>
<keyword id="KW-0456">Lyase</keyword>
<keyword id="KW-0464">Manganese</keyword>
<keyword id="KW-0479">Metal-binding</keyword>
<keyword id="KW-1185">Reference proteome</keyword>
<dbReference type="EC" id="4.1.1.126" evidence="2"/>
<dbReference type="EMBL" id="L77117">
    <property type="protein sequence ID" value="AAB99135.1"/>
    <property type="molecule type" value="Genomic_DNA"/>
</dbReference>
<dbReference type="PIR" id="D64441">
    <property type="entry name" value="D64441"/>
</dbReference>
<dbReference type="RefSeq" id="WP_010870644.1">
    <property type="nucleotide sequence ID" value="NC_000909.1"/>
</dbReference>
<dbReference type="SMR" id="Q58533"/>
<dbReference type="FunCoup" id="Q58533">
    <property type="interactions" value="12"/>
</dbReference>
<dbReference type="STRING" id="243232.MJ_1133"/>
<dbReference type="PaxDb" id="243232-MJ_1133"/>
<dbReference type="EnsemblBacteria" id="AAB99135">
    <property type="protein sequence ID" value="AAB99135"/>
    <property type="gene ID" value="MJ_1133"/>
</dbReference>
<dbReference type="GeneID" id="1452029"/>
<dbReference type="KEGG" id="mja:MJ_1133"/>
<dbReference type="eggNOG" id="arCOG01671">
    <property type="taxonomic scope" value="Archaea"/>
</dbReference>
<dbReference type="HOGENOM" id="CLU_023348_5_1_2"/>
<dbReference type="InParanoid" id="Q58533"/>
<dbReference type="OrthoDB" id="8480at2157"/>
<dbReference type="PhylomeDB" id="Q58533"/>
<dbReference type="UniPathway" id="UPA00057"/>
<dbReference type="Proteomes" id="UP000000805">
    <property type="component" value="Chromosome"/>
</dbReference>
<dbReference type="GO" id="GO:0005737">
    <property type="term" value="C:cytoplasm"/>
    <property type="evidence" value="ECO:0000318"/>
    <property type="project" value="GO_Central"/>
</dbReference>
<dbReference type="GO" id="GO:0016831">
    <property type="term" value="F:carboxy-lyase activity"/>
    <property type="evidence" value="ECO:0000318"/>
    <property type="project" value="GO_Central"/>
</dbReference>
<dbReference type="GO" id="GO:0046872">
    <property type="term" value="F:metal ion binding"/>
    <property type="evidence" value="ECO:0007669"/>
    <property type="project" value="UniProtKB-KW"/>
</dbReference>
<dbReference type="GO" id="GO:0008299">
    <property type="term" value="P:isoprenoid biosynthetic process"/>
    <property type="evidence" value="ECO:0007669"/>
    <property type="project" value="UniProtKB-KW"/>
</dbReference>
<dbReference type="FunFam" id="3.40.1670.10:FF:000003">
    <property type="entry name" value="Phenolic acid decarboxylase"/>
    <property type="match status" value="1"/>
</dbReference>
<dbReference type="Gene3D" id="3.40.1670.10">
    <property type="entry name" value="UbiD C-terminal domain-like"/>
    <property type="match status" value="1"/>
</dbReference>
<dbReference type="InterPro" id="IPR002830">
    <property type="entry name" value="UbiD"/>
</dbReference>
<dbReference type="InterPro" id="IPR049381">
    <property type="entry name" value="UbiD-like_C"/>
</dbReference>
<dbReference type="InterPro" id="IPR048304">
    <property type="entry name" value="UbiD_Rift_dom"/>
</dbReference>
<dbReference type="NCBIfam" id="TIGR00148">
    <property type="entry name" value="UbiD family decarboxylase"/>
    <property type="match status" value="1"/>
</dbReference>
<dbReference type="PANTHER" id="PTHR30108">
    <property type="entry name" value="3-OCTAPRENYL-4-HYDROXYBENZOATE CARBOXY-LYASE-RELATED"/>
    <property type="match status" value="1"/>
</dbReference>
<dbReference type="PANTHER" id="PTHR30108:SF21">
    <property type="entry name" value="4-HYDROXYBENZOATE DECARBOXYLASE"/>
    <property type="match status" value="1"/>
</dbReference>
<dbReference type="Pfam" id="PF01977">
    <property type="entry name" value="UbiD"/>
    <property type="match status" value="1"/>
</dbReference>
<dbReference type="Pfam" id="PF20696">
    <property type="entry name" value="UbiD_C"/>
    <property type="match status" value="1"/>
</dbReference>
<dbReference type="SUPFAM" id="SSF50475">
    <property type="entry name" value="FMN-binding split barrel"/>
    <property type="match status" value="1"/>
</dbReference>
<dbReference type="SUPFAM" id="SSF143968">
    <property type="entry name" value="UbiD C-terminal domain-like"/>
    <property type="match status" value="1"/>
</dbReference>
<protein>
    <recommendedName>
        <fullName evidence="2">Anhydromevalonate phosphate decarboxylase</fullName>
        <shortName evidence="2">AMPD</shortName>
        <ecNumber evidence="2">4.1.1.126</ecNumber>
    </recommendedName>
</protein>
<name>AMPD_METJA</name>
<organism>
    <name type="scientific">Methanocaldococcus jannaschii (strain ATCC 43067 / DSM 2661 / JAL-1 / JCM 10045 / NBRC 100440)</name>
    <name type="common">Methanococcus jannaschii</name>
    <dbReference type="NCBI Taxonomy" id="243232"/>
    <lineage>
        <taxon>Archaea</taxon>
        <taxon>Methanobacteriati</taxon>
        <taxon>Methanobacteriota</taxon>
        <taxon>Methanomada group</taxon>
        <taxon>Methanococci</taxon>
        <taxon>Methanococcales</taxon>
        <taxon>Methanocaldococcaceae</taxon>
        <taxon>Methanocaldococcus</taxon>
    </lineage>
</organism>
<proteinExistence type="inferred from homology"/>
<sequence length="421" mass="47215">MREIINKLNPIIIDKADKKFGVSRILKKYDGKPVYIKDVNGFEVVGNLCSRETLSKIFNVKKEDFIFFMLDAMEKEKEGKLKINNKLKEKYIVEIPENIKNWPIPIYYEKDAGAYITSGVVVVYDKDYGYNLSIHRILVKDDYLVIRMVEQRHLHFLYNKALKEKGYLDVAIVIGVHPAVLLAGSTSADITFDELKFAAALLGGEIGVFELDNGLLVPEAEFIIEGKILPEVDDEGPFVDITGTYDIVRKQPIIKIEKLYRKEKPIFHALLPGGIEHKTLMGMPQEPRILKGVRNTVPTVKNIVLTEGGCCWLHAVVQIEKRTEGDGKNAILAAFASHPSLKHVIVVDDDINIFDINDVEYAIATRVQGDKDIVIISGAKGSSLDPSSDLKNKLTAKVGVDATMSLIKGREHFERAKIPDK</sequence>
<reference key="1">
    <citation type="journal article" date="1996" name="Science">
        <title>Complete genome sequence of the methanogenic archaeon, Methanococcus jannaschii.</title>
        <authorList>
            <person name="Bult C.J."/>
            <person name="White O."/>
            <person name="Olsen G.J."/>
            <person name="Zhou L."/>
            <person name="Fleischmann R.D."/>
            <person name="Sutton G.G."/>
            <person name="Blake J.A."/>
            <person name="FitzGerald L.M."/>
            <person name="Clayton R.A."/>
            <person name="Gocayne J.D."/>
            <person name="Kerlavage A.R."/>
            <person name="Dougherty B.A."/>
            <person name="Tomb J.-F."/>
            <person name="Adams M.D."/>
            <person name="Reich C.I."/>
            <person name="Overbeek R."/>
            <person name="Kirkness E.F."/>
            <person name="Weinstock K.G."/>
            <person name="Merrick J.M."/>
            <person name="Glodek A."/>
            <person name="Scott J.L."/>
            <person name="Geoghagen N.S.M."/>
            <person name="Weidman J.F."/>
            <person name="Fuhrmann J.L."/>
            <person name="Nguyen D."/>
            <person name="Utterback T.R."/>
            <person name="Kelley J.M."/>
            <person name="Peterson J.D."/>
            <person name="Sadow P.W."/>
            <person name="Hanna M.C."/>
            <person name="Cotton M.D."/>
            <person name="Roberts K.M."/>
            <person name="Hurst M.A."/>
            <person name="Kaine B.P."/>
            <person name="Borodovsky M."/>
            <person name="Klenk H.-P."/>
            <person name="Fraser C.M."/>
            <person name="Smith H.O."/>
            <person name="Woese C.R."/>
            <person name="Venter J.C."/>
        </authorList>
    </citation>
    <scope>NUCLEOTIDE SEQUENCE [LARGE SCALE GENOMIC DNA]</scope>
    <source>
        <strain>ATCC 43067 / DSM 2661 / JAL-1 / JCM 10045 / NBRC 100440</strain>
    </source>
</reference>
<comment type="function">
    <text evidence="2">Catalyzes the conversion of trans-anhydromevalonate 5-phosphate (tAHMP) into isopentenyl phosphate (By similarity). Involved in the archaeal mevalonate (MVA) pathway, which provides fundamental precursors for isoprenoid biosynthesis, such as isopentenyl diphosphate (IPP) and dimethylallyl diphosphate (DMAPP) (By similarity).</text>
</comment>
<comment type="catalytic activity">
    <reaction evidence="2">
        <text>(2E)-3-methyl-5-phosphooxypent-2-enoate + H(+) = isopentenyl phosphate + CO2</text>
        <dbReference type="Rhea" id="RHEA:78971"/>
        <dbReference type="ChEBI" id="CHEBI:15378"/>
        <dbReference type="ChEBI" id="CHEBI:16526"/>
        <dbReference type="ChEBI" id="CHEBI:65078"/>
        <dbReference type="ChEBI" id="CHEBI:229665"/>
        <dbReference type="EC" id="4.1.1.126"/>
    </reaction>
    <physiologicalReaction direction="left-to-right" evidence="2">
        <dbReference type="Rhea" id="RHEA:78972"/>
    </physiologicalReaction>
</comment>
<comment type="cofactor">
    <cofactor evidence="1">
        <name>prenylated FMN</name>
        <dbReference type="ChEBI" id="CHEBI:87746"/>
    </cofactor>
</comment>
<comment type="cofactor">
    <cofactor evidence="1">
        <name>Mn(2+)</name>
        <dbReference type="ChEBI" id="CHEBI:29035"/>
    </cofactor>
</comment>
<comment type="pathway">
    <text evidence="2">Isoprenoid biosynthesis; isopentenyl diphosphate biosynthesis via mevalonate pathway.</text>
</comment>
<comment type="similarity">
    <text evidence="3">Belongs to the UbiD family.</text>
</comment>